<organism>
    <name type="scientific">Rhodospirillum rubrum (strain ATCC 11170 / ATH 1.1.1 / DSM 467 / LMG 4362 / NCIMB 8255 / S1)</name>
    <dbReference type="NCBI Taxonomy" id="269796"/>
    <lineage>
        <taxon>Bacteria</taxon>
        <taxon>Pseudomonadati</taxon>
        <taxon>Pseudomonadota</taxon>
        <taxon>Alphaproteobacteria</taxon>
        <taxon>Rhodospirillales</taxon>
        <taxon>Rhodospirillaceae</taxon>
        <taxon>Rhodospirillum</taxon>
    </lineage>
</organism>
<gene>
    <name evidence="1" type="primary">fabZ</name>
    <name type="ordered locus">Rru_A1596</name>
</gene>
<evidence type="ECO:0000255" key="1">
    <source>
        <dbReference type="HAMAP-Rule" id="MF_00406"/>
    </source>
</evidence>
<evidence type="ECO:0000305" key="2"/>
<accession>Q2RTZ9</accession>
<sequence length="160" mass="18046">MQADPQENQVRTTVDIARIIDMIPHRYPFLMVDKLIDMVRGESAIGIKNVTINEPFFQGHFPNRPVMPGVLIVEAMAQTAAVLVVETLGVRAEGKIVYFMIVENARFRKPVIPGDQLRLHVAKERHRGNVWKFRGVAKVDEVVVAEATFAAMIMDEEPQP</sequence>
<keyword id="KW-0963">Cytoplasm</keyword>
<keyword id="KW-0441">Lipid A biosynthesis</keyword>
<keyword id="KW-0444">Lipid biosynthesis</keyword>
<keyword id="KW-0443">Lipid metabolism</keyword>
<keyword id="KW-0456">Lyase</keyword>
<keyword id="KW-1185">Reference proteome</keyword>
<reference key="1">
    <citation type="journal article" date="2011" name="Stand. Genomic Sci.">
        <title>Complete genome sequence of Rhodospirillum rubrum type strain (S1).</title>
        <authorList>
            <person name="Munk A.C."/>
            <person name="Copeland A."/>
            <person name="Lucas S."/>
            <person name="Lapidus A."/>
            <person name="Del Rio T.G."/>
            <person name="Barry K."/>
            <person name="Detter J.C."/>
            <person name="Hammon N."/>
            <person name="Israni S."/>
            <person name="Pitluck S."/>
            <person name="Brettin T."/>
            <person name="Bruce D."/>
            <person name="Han C."/>
            <person name="Tapia R."/>
            <person name="Gilna P."/>
            <person name="Schmutz J."/>
            <person name="Larimer F."/>
            <person name="Land M."/>
            <person name="Kyrpides N.C."/>
            <person name="Mavromatis K."/>
            <person name="Richardson P."/>
            <person name="Rohde M."/>
            <person name="Goeker M."/>
            <person name="Klenk H.P."/>
            <person name="Zhang Y."/>
            <person name="Roberts G.P."/>
            <person name="Reslewic S."/>
            <person name="Schwartz D.C."/>
        </authorList>
    </citation>
    <scope>NUCLEOTIDE SEQUENCE [LARGE SCALE GENOMIC DNA]</scope>
    <source>
        <strain>ATCC 11170 / ATH 1.1.1 / DSM 467 / LMG 4362 / NCIMB 8255 / S1</strain>
    </source>
</reference>
<protein>
    <recommendedName>
        <fullName evidence="1">3-hydroxyacyl-[acyl-carrier-protein] dehydratase FabZ</fullName>
        <ecNumber evidence="1">4.2.1.59</ecNumber>
    </recommendedName>
    <alternativeName>
        <fullName evidence="1">(3R)-hydroxymyristoyl-[acyl-carrier-protein] dehydratase</fullName>
        <shortName evidence="1">(3R)-hydroxymyristoyl-ACP dehydrase</shortName>
    </alternativeName>
    <alternativeName>
        <fullName evidence="1">Beta-hydroxyacyl-ACP dehydratase</fullName>
    </alternativeName>
</protein>
<feature type="chain" id="PRO_0000230832" description="3-hydroxyacyl-[acyl-carrier-protein] dehydratase FabZ">
    <location>
        <begin position="1"/>
        <end position="160"/>
    </location>
</feature>
<feature type="active site" evidence="1">
    <location>
        <position position="60"/>
    </location>
</feature>
<name>FABZ_RHORT</name>
<comment type="function">
    <text evidence="1">Involved in unsaturated fatty acids biosynthesis. Catalyzes the dehydration of short chain beta-hydroxyacyl-ACPs and long chain saturated and unsaturated beta-hydroxyacyl-ACPs.</text>
</comment>
<comment type="catalytic activity">
    <reaction evidence="1">
        <text>a (3R)-hydroxyacyl-[ACP] = a (2E)-enoyl-[ACP] + H2O</text>
        <dbReference type="Rhea" id="RHEA:13097"/>
        <dbReference type="Rhea" id="RHEA-COMP:9925"/>
        <dbReference type="Rhea" id="RHEA-COMP:9945"/>
        <dbReference type="ChEBI" id="CHEBI:15377"/>
        <dbReference type="ChEBI" id="CHEBI:78784"/>
        <dbReference type="ChEBI" id="CHEBI:78827"/>
        <dbReference type="EC" id="4.2.1.59"/>
    </reaction>
</comment>
<comment type="subcellular location">
    <subcellularLocation>
        <location evidence="1">Cytoplasm</location>
    </subcellularLocation>
</comment>
<comment type="similarity">
    <text evidence="1">Belongs to the thioester dehydratase family. FabZ subfamily.</text>
</comment>
<comment type="sequence caution" evidence="2">
    <conflict type="erroneous initiation">
        <sequence resource="EMBL-CDS" id="ABC22396"/>
    </conflict>
</comment>
<proteinExistence type="inferred from homology"/>
<dbReference type="EC" id="4.2.1.59" evidence="1"/>
<dbReference type="EMBL" id="CP000230">
    <property type="protein sequence ID" value="ABC22396.1"/>
    <property type="status" value="ALT_INIT"/>
    <property type="molecule type" value="Genomic_DNA"/>
</dbReference>
<dbReference type="RefSeq" id="YP_426683.1">
    <property type="nucleotide sequence ID" value="NC_007643.1"/>
</dbReference>
<dbReference type="SMR" id="Q2RTZ9"/>
<dbReference type="STRING" id="269796.Rru_A1596"/>
<dbReference type="EnsemblBacteria" id="ABC22396">
    <property type="protein sequence ID" value="ABC22396"/>
    <property type="gene ID" value="Rru_A1596"/>
</dbReference>
<dbReference type="KEGG" id="rru:Rru_A1596"/>
<dbReference type="PATRIC" id="fig|269796.9.peg.1670"/>
<dbReference type="eggNOG" id="COG0764">
    <property type="taxonomic scope" value="Bacteria"/>
</dbReference>
<dbReference type="HOGENOM" id="CLU_078912_1_2_5"/>
<dbReference type="PhylomeDB" id="Q2RTZ9"/>
<dbReference type="Proteomes" id="UP000001929">
    <property type="component" value="Chromosome"/>
</dbReference>
<dbReference type="GO" id="GO:0005737">
    <property type="term" value="C:cytoplasm"/>
    <property type="evidence" value="ECO:0007669"/>
    <property type="project" value="UniProtKB-SubCell"/>
</dbReference>
<dbReference type="GO" id="GO:0016020">
    <property type="term" value="C:membrane"/>
    <property type="evidence" value="ECO:0007669"/>
    <property type="project" value="GOC"/>
</dbReference>
<dbReference type="GO" id="GO:0019171">
    <property type="term" value="F:(3R)-hydroxyacyl-[acyl-carrier-protein] dehydratase activity"/>
    <property type="evidence" value="ECO:0007669"/>
    <property type="project" value="UniProtKB-EC"/>
</dbReference>
<dbReference type="GO" id="GO:0006633">
    <property type="term" value="P:fatty acid biosynthetic process"/>
    <property type="evidence" value="ECO:0007669"/>
    <property type="project" value="UniProtKB-UniRule"/>
</dbReference>
<dbReference type="GO" id="GO:0009245">
    <property type="term" value="P:lipid A biosynthetic process"/>
    <property type="evidence" value="ECO:0007669"/>
    <property type="project" value="UniProtKB-UniRule"/>
</dbReference>
<dbReference type="CDD" id="cd01288">
    <property type="entry name" value="FabZ"/>
    <property type="match status" value="1"/>
</dbReference>
<dbReference type="FunFam" id="3.10.129.10:FF:000001">
    <property type="entry name" value="3-hydroxyacyl-[acyl-carrier-protein] dehydratase FabZ"/>
    <property type="match status" value="1"/>
</dbReference>
<dbReference type="Gene3D" id="3.10.129.10">
    <property type="entry name" value="Hotdog Thioesterase"/>
    <property type="match status" value="1"/>
</dbReference>
<dbReference type="HAMAP" id="MF_00406">
    <property type="entry name" value="FabZ"/>
    <property type="match status" value="1"/>
</dbReference>
<dbReference type="InterPro" id="IPR013114">
    <property type="entry name" value="FabA_FabZ"/>
</dbReference>
<dbReference type="InterPro" id="IPR010084">
    <property type="entry name" value="FabZ"/>
</dbReference>
<dbReference type="InterPro" id="IPR029069">
    <property type="entry name" value="HotDog_dom_sf"/>
</dbReference>
<dbReference type="NCBIfam" id="TIGR01750">
    <property type="entry name" value="fabZ"/>
    <property type="match status" value="1"/>
</dbReference>
<dbReference type="NCBIfam" id="NF000582">
    <property type="entry name" value="PRK00006.1"/>
    <property type="match status" value="1"/>
</dbReference>
<dbReference type="PANTHER" id="PTHR30272">
    <property type="entry name" value="3-HYDROXYACYL-[ACYL-CARRIER-PROTEIN] DEHYDRATASE"/>
    <property type="match status" value="1"/>
</dbReference>
<dbReference type="PANTHER" id="PTHR30272:SF1">
    <property type="entry name" value="3-HYDROXYACYL-[ACYL-CARRIER-PROTEIN] DEHYDRATASE"/>
    <property type="match status" value="1"/>
</dbReference>
<dbReference type="Pfam" id="PF07977">
    <property type="entry name" value="FabA"/>
    <property type="match status" value="1"/>
</dbReference>
<dbReference type="SUPFAM" id="SSF54637">
    <property type="entry name" value="Thioesterase/thiol ester dehydrase-isomerase"/>
    <property type="match status" value="1"/>
</dbReference>